<keyword id="KW-0158">Chromosome</keyword>
<keyword id="KW-0238">DNA-binding</keyword>
<keyword id="KW-0325">Glycoprotein</keyword>
<keyword id="KW-0379">Hydroxylation</keyword>
<keyword id="KW-1017">Isopeptide bond</keyword>
<keyword id="KW-0488">Methylation</keyword>
<keyword id="KW-0544">Nucleosome core</keyword>
<keyword id="KW-0539">Nucleus</keyword>
<keyword id="KW-0597">Phosphoprotein</keyword>
<keyword id="KW-1267">Proteomics identification</keyword>
<keyword id="KW-1185">Reference proteome</keyword>
<keyword id="KW-0832">Ubl conjugation</keyword>
<sequence>MSAEYGQRQQPGGRGGRSSGNKKSKKRCRRKESYSMYIYKVLKQVHPDIGISAKAMSIMNSFVNDVFEQLACEAARLAQYSGRTTLTSREVQTAVRLLLPGELAKHAVSEGTKAVTKYTSSK</sequence>
<comment type="function">
    <text evidence="4">Core component of nucleosome. Nucleosomes wrap and compact DNA into chromatin, limiting DNA accessibility to the cellular machineries which require DNA as a template. Histones thereby play a central role in transcription regulation, DNA repair, DNA replication and chromosomal stability. DNA accessibility is regulated via a complex set of post-translational modifications of histones, also called histone code, and nucleosome remodeling.</text>
</comment>
<comment type="subunit">
    <text evidence="4">The nucleosome is a histone octamer containing two molecules each of H2A, H2B, H3 and H4 assembled in one H3-H4 heterotetramer and two H2A-H2B heterodimers. The octamer wraps approximately 147 bp of DNA.</text>
</comment>
<comment type="subcellular location">
    <subcellularLocation>
        <location evidence="4">Chromosome</location>
    </subcellularLocation>
    <subcellularLocation>
        <location evidence="4">Nucleus</location>
    </subcellularLocation>
</comment>
<comment type="similarity">
    <text evidence="9">Belongs to the histone H2B family.</text>
</comment>
<dbReference type="EMBL" id="AC021097">
    <property type="status" value="NOT_ANNOTATED_CDS"/>
    <property type="molecule type" value="Genomic_DNA"/>
</dbReference>
<dbReference type="CCDS" id="CCDS94232.1"/>
<dbReference type="RefSeq" id="NP_001356054.2">
    <property type="nucleotide sequence ID" value="NM_001369125.3"/>
</dbReference>
<dbReference type="SMR" id="A0A2R8Y619"/>
<dbReference type="FunCoup" id="A0A2R8Y619">
    <property type="interactions" value="6"/>
</dbReference>
<dbReference type="STRING" id="9606.ENSP00000495192"/>
<dbReference type="GlyCosmos" id="A0A2R8Y619">
    <property type="glycosylation" value="1 site, No reported glycans"/>
</dbReference>
<dbReference type="GlyGen" id="A0A2R8Y619">
    <property type="glycosylation" value="1 site"/>
</dbReference>
<dbReference type="jPOST" id="A0A2R8Y619"/>
<dbReference type="MassIVE" id="A0A2R8Y619"/>
<dbReference type="PeptideAtlas" id="A0A2R8Y619"/>
<dbReference type="Ensembl" id="ENST00000644661.2">
    <property type="protein sequence ID" value="ENSP00000495192.1"/>
    <property type="gene ID" value="ENSG00000285480.2"/>
</dbReference>
<dbReference type="GeneID" id="114483833"/>
<dbReference type="MANE-Select" id="ENST00000644661.2">
    <property type="protein sequence ID" value="ENSP00000495192.1"/>
    <property type="RefSeq nucleotide sequence ID" value="NM_001369125.3"/>
    <property type="RefSeq protein sequence ID" value="NP_001356054.2"/>
</dbReference>
<dbReference type="AGR" id="HGNC:53833"/>
<dbReference type="GeneCards" id="H2BK1"/>
<dbReference type="HGNC" id="HGNC:53833">
    <property type="gene designation" value="H2BK1"/>
</dbReference>
<dbReference type="HPA" id="ENSG00000285480">
    <property type="expression patterns" value="Tissue enhanced (skin)"/>
</dbReference>
<dbReference type="neXtProt" id="NX_A0A2R8Y619"/>
<dbReference type="VEuPathDB" id="HostDB:ENSG00000285480"/>
<dbReference type="GeneTree" id="ENSGT01130000278348"/>
<dbReference type="InParanoid" id="A0A2R8Y619"/>
<dbReference type="OMA" id="WAYMHAS"/>
<dbReference type="OrthoDB" id="1733721at2759"/>
<dbReference type="PAN-GO" id="A0A2R8Y619">
    <property type="GO annotations" value="2 GO annotations based on evolutionary models"/>
</dbReference>
<dbReference type="SIGNOR" id="A0A2R8Y619"/>
<dbReference type="PRO" id="PR:A0A2R8Y619"/>
<dbReference type="Proteomes" id="UP000005640">
    <property type="component" value="Chromosome 7"/>
</dbReference>
<dbReference type="Bgee" id="ENSG00000285480">
    <property type="expression patterns" value="Expressed in primordial germ cell in gonad and 85 other cell types or tissues"/>
</dbReference>
<dbReference type="GO" id="GO:0000786">
    <property type="term" value="C:nucleosome"/>
    <property type="evidence" value="ECO:0007669"/>
    <property type="project" value="UniProtKB-KW"/>
</dbReference>
<dbReference type="GO" id="GO:0005634">
    <property type="term" value="C:nucleus"/>
    <property type="evidence" value="ECO:0007669"/>
    <property type="project" value="UniProtKB-SubCell"/>
</dbReference>
<dbReference type="GO" id="GO:0003677">
    <property type="term" value="F:DNA binding"/>
    <property type="evidence" value="ECO:0007669"/>
    <property type="project" value="UniProtKB-KW"/>
</dbReference>
<dbReference type="GO" id="GO:0046982">
    <property type="term" value="F:protein heterodimerization activity"/>
    <property type="evidence" value="ECO:0007669"/>
    <property type="project" value="InterPro"/>
</dbReference>
<dbReference type="GO" id="GO:0030527">
    <property type="term" value="F:structural constituent of chromatin"/>
    <property type="evidence" value="ECO:0007669"/>
    <property type="project" value="InterPro"/>
</dbReference>
<dbReference type="CDD" id="cd22910">
    <property type="entry name" value="HFD_H2B"/>
    <property type="match status" value="1"/>
</dbReference>
<dbReference type="FunFam" id="1.10.20.10:FF:000016">
    <property type="entry name" value="Histone H2B"/>
    <property type="match status" value="1"/>
</dbReference>
<dbReference type="Gene3D" id="1.10.20.10">
    <property type="entry name" value="Histone, subunit A"/>
    <property type="match status" value="1"/>
</dbReference>
<dbReference type="InterPro" id="IPR009072">
    <property type="entry name" value="Histone-fold"/>
</dbReference>
<dbReference type="InterPro" id="IPR007125">
    <property type="entry name" value="Histone_H2A/H2B/H3"/>
</dbReference>
<dbReference type="InterPro" id="IPR000558">
    <property type="entry name" value="Histone_H2B"/>
</dbReference>
<dbReference type="InterPro" id="IPR055333">
    <property type="entry name" value="HISTONE_H2B_site"/>
</dbReference>
<dbReference type="PANTHER" id="PTHR23428">
    <property type="entry name" value="HISTONE H2B"/>
    <property type="match status" value="1"/>
</dbReference>
<dbReference type="Pfam" id="PF00125">
    <property type="entry name" value="Histone"/>
    <property type="match status" value="1"/>
</dbReference>
<dbReference type="PRINTS" id="PR00621">
    <property type="entry name" value="HISTONEH2B"/>
</dbReference>
<dbReference type="SMART" id="SM00427">
    <property type="entry name" value="H2B"/>
    <property type="match status" value="1"/>
</dbReference>
<dbReference type="SUPFAM" id="SSF47113">
    <property type="entry name" value="Histone-fold"/>
    <property type="match status" value="1"/>
</dbReference>
<dbReference type="PROSITE" id="PS00357">
    <property type="entry name" value="HISTONE_H2B"/>
    <property type="match status" value="1"/>
</dbReference>
<name>H2BK1_HUMAN</name>
<proteinExistence type="evidence at protein level"/>
<accession>A0A2R8Y619</accession>
<evidence type="ECO:0000250" key="1">
    <source>
        <dbReference type="UniProtKB" id="P23527"/>
    </source>
</evidence>
<evidence type="ECO:0000250" key="2">
    <source>
        <dbReference type="UniProtKB" id="P33778"/>
    </source>
</evidence>
<evidence type="ECO:0000250" key="3">
    <source>
        <dbReference type="UniProtKB" id="P62807"/>
    </source>
</evidence>
<evidence type="ECO:0000250" key="4">
    <source>
        <dbReference type="UniProtKB" id="P70696"/>
    </source>
</evidence>
<evidence type="ECO:0000250" key="5">
    <source>
        <dbReference type="UniProtKB" id="Q00729"/>
    </source>
</evidence>
<evidence type="ECO:0000250" key="6">
    <source>
        <dbReference type="UniProtKB" id="Q64475"/>
    </source>
</evidence>
<evidence type="ECO:0000250" key="7">
    <source>
        <dbReference type="UniProtKB" id="Q96A08"/>
    </source>
</evidence>
<evidence type="ECO:0000256" key="8">
    <source>
        <dbReference type="SAM" id="MobiDB-lite"/>
    </source>
</evidence>
<evidence type="ECO:0000305" key="9"/>
<evidence type="ECO:0000312" key="10">
    <source>
        <dbReference type="HGNC" id="HGNC:53833"/>
    </source>
</evidence>
<reference key="1">
    <citation type="journal article" date="2003" name="Nature">
        <title>The DNA sequence of human chromosome 7.</title>
        <authorList>
            <person name="Hillier L.W."/>
            <person name="Fulton R.S."/>
            <person name="Fulton L.A."/>
            <person name="Graves T.A."/>
            <person name="Pepin K.H."/>
            <person name="Wagner-McPherson C."/>
            <person name="Layman D."/>
            <person name="Maas J."/>
            <person name="Jaeger S."/>
            <person name="Walker R."/>
            <person name="Wylie K."/>
            <person name="Sekhon M."/>
            <person name="Becker M.C."/>
            <person name="O'Laughlin M.D."/>
            <person name="Schaller M.E."/>
            <person name="Fewell G.A."/>
            <person name="Delehaunty K.D."/>
            <person name="Miner T.L."/>
            <person name="Nash W.E."/>
            <person name="Cordes M."/>
            <person name="Du H."/>
            <person name="Sun H."/>
            <person name="Edwards J."/>
            <person name="Bradshaw-Cordum H."/>
            <person name="Ali J."/>
            <person name="Andrews S."/>
            <person name="Isak A."/>
            <person name="Vanbrunt A."/>
            <person name="Nguyen C."/>
            <person name="Du F."/>
            <person name="Lamar B."/>
            <person name="Courtney L."/>
            <person name="Kalicki J."/>
            <person name="Ozersky P."/>
            <person name="Bielicki L."/>
            <person name="Scott K."/>
            <person name="Holmes A."/>
            <person name="Harkins R."/>
            <person name="Harris A."/>
            <person name="Strong C.M."/>
            <person name="Hou S."/>
            <person name="Tomlinson C."/>
            <person name="Dauphin-Kohlberg S."/>
            <person name="Kozlowicz-Reilly A."/>
            <person name="Leonard S."/>
            <person name="Rohlfing T."/>
            <person name="Rock S.M."/>
            <person name="Tin-Wollam A.-M."/>
            <person name="Abbott A."/>
            <person name="Minx P."/>
            <person name="Maupin R."/>
            <person name="Strowmatt C."/>
            <person name="Latreille P."/>
            <person name="Miller N."/>
            <person name="Johnson D."/>
            <person name="Murray J."/>
            <person name="Woessner J.P."/>
            <person name="Wendl M.C."/>
            <person name="Yang S.-P."/>
            <person name="Schultz B.R."/>
            <person name="Wallis J.W."/>
            <person name="Spieth J."/>
            <person name="Bieri T.A."/>
            <person name="Nelson J.O."/>
            <person name="Berkowicz N."/>
            <person name="Wohldmann P.E."/>
            <person name="Cook L.L."/>
            <person name="Hickenbotham M.T."/>
            <person name="Eldred J."/>
            <person name="Williams D."/>
            <person name="Bedell J.A."/>
            <person name="Mardis E.R."/>
            <person name="Clifton S.W."/>
            <person name="Chissoe S.L."/>
            <person name="Marra M.A."/>
            <person name="Raymond C."/>
            <person name="Haugen E."/>
            <person name="Gillett W."/>
            <person name="Zhou Y."/>
            <person name="James R."/>
            <person name="Phelps K."/>
            <person name="Iadanoto S."/>
            <person name="Bubb K."/>
            <person name="Simms E."/>
            <person name="Levy R."/>
            <person name="Clendenning J."/>
            <person name="Kaul R."/>
            <person name="Kent W.J."/>
            <person name="Furey T.S."/>
            <person name="Baertsch R.A."/>
            <person name="Brent M.R."/>
            <person name="Keibler E."/>
            <person name="Flicek P."/>
            <person name="Bork P."/>
            <person name="Suyama M."/>
            <person name="Bailey J.A."/>
            <person name="Portnoy M.E."/>
            <person name="Torrents D."/>
            <person name="Chinwalla A.T."/>
            <person name="Gish W.R."/>
            <person name="Eddy S.R."/>
            <person name="McPherson J.D."/>
            <person name="Olson M.V."/>
            <person name="Eichler E.E."/>
            <person name="Green E.D."/>
            <person name="Waterston R.H."/>
            <person name="Wilson R.K."/>
        </authorList>
    </citation>
    <scope>NUCLEOTIDE SEQUENCE [LARGE SCALE GENOMIC DNA]</scope>
</reference>
<reference key="2">
    <citation type="journal article" date="2019" name="Genome Res.">
        <title>Discovery of high-confidence human protein-coding genes and exons by whole-genome PhyloCSF helps elucidate 118 GWAS loci.</title>
        <authorList>
            <person name="Mudge J.M."/>
            <person name="Jungreis I."/>
            <person name="Hunt T."/>
            <person name="Gonzalez J.M."/>
            <person name="Wright J.C."/>
            <person name="Kay M."/>
            <person name="Davidson C."/>
            <person name="Fitzgerald S."/>
            <person name="Seal R."/>
            <person name="Tweedie S."/>
            <person name="He L."/>
            <person name="Waterhouse R.M."/>
            <person name="Li Y."/>
            <person name="Bruford E."/>
            <person name="Choudhary J.S."/>
            <person name="Frankish A."/>
            <person name="Kellis M."/>
        </authorList>
    </citation>
    <scope>IDENTIFICATION</scope>
</reference>
<feature type="initiator methionine" description="Removed" evidence="1">
    <location>
        <position position="1"/>
    </location>
</feature>
<feature type="chain" id="PRO_0000450355" description="Histone H2B type 2-K1">
    <location>
        <begin position="2"/>
        <end position="122"/>
    </location>
</feature>
<feature type="region of interest" description="Disordered" evidence="8">
    <location>
        <begin position="1"/>
        <end position="30"/>
    </location>
</feature>
<feature type="compositionally biased region" description="Basic residues" evidence="8">
    <location>
        <begin position="20"/>
        <end position="30"/>
    </location>
</feature>
<feature type="modified residue" description="N6-(2-hydroxyisobutyryl)lysine; alternate" evidence="2">
    <location>
        <position position="31"/>
    </location>
</feature>
<feature type="modified residue" description="N6-(beta-hydroxybutyryl)lysine; alternate" evidence="2">
    <location>
        <position position="31"/>
    </location>
</feature>
<feature type="modified residue" description="N6-crotonyllysine; alternate" evidence="7">
    <location>
        <position position="31"/>
    </location>
</feature>
<feature type="modified residue" description="N6-glutaryllysine; alternate" evidence="2">
    <location>
        <position position="31"/>
    </location>
</feature>
<feature type="modified residue" description="N6-succinyllysine; alternate" evidence="2">
    <location>
        <position position="31"/>
    </location>
</feature>
<feature type="modified residue" description="Phosphoserine" evidence="6">
    <location>
        <position position="33"/>
    </location>
</feature>
<feature type="modified residue" description="N6-(2-hydroxyisobutyryl)lysine; alternate" evidence="2">
    <location>
        <position position="40"/>
    </location>
</feature>
<feature type="modified residue" description="N6-glutaryllysine; alternate" evidence="2">
    <location>
        <position position="40"/>
    </location>
</feature>
<feature type="modified residue" description="N6-lactoyllysine; alternate" evidence="2">
    <location>
        <position position="40"/>
    </location>
</feature>
<feature type="modified residue" description="N6-(2-hydroxyisobutyryl)lysine; alternate" evidence="2">
    <location>
        <position position="43"/>
    </location>
</feature>
<feature type="modified residue" description="N6-glutaryllysine; alternate" evidence="2">
    <location>
        <position position="43"/>
    </location>
</feature>
<feature type="modified residue" description="N6-methyllysine" evidence="3">
    <location>
        <position position="43"/>
    </location>
</feature>
<feature type="modified residue" description="N6-methyllysine; alternate" evidence="3">
    <location>
        <position position="43"/>
    </location>
</feature>
<feature type="modified residue" description="N6,N6-dimethyllysine" evidence="3">
    <location>
        <position position="54"/>
    </location>
</feature>
<feature type="modified residue" description="N6,N6-dimethyllysine; alternate" evidence="3">
    <location>
        <position position="54"/>
    </location>
</feature>
<feature type="modified residue" description="N6-(2-hydroxyisobutyryl)lysine; alternate" evidence="2">
    <location>
        <position position="54"/>
    </location>
</feature>
<feature type="modified residue" description="Dimethylated arginine" evidence="7">
    <location>
        <position position="76"/>
    </location>
</feature>
<feature type="modified residue" description="Phosphoserine" evidence="7">
    <location>
        <position position="81"/>
    </location>
</feature>
<feature type="modified residue" description="Omega-N-methylarginine" evidence="7">
    <location>
        <position position="83"/>
    </location>
</feature>
<feature type="modified residue" description="Omega-N-methylarginine" evidence="7">
    <location>
        <position position="89"/>
    </location>
</feature>
<feature type="modified residue" description="N6-(2-hydroxyisobutyryl)lysine; alternate" evidence="2">
    <location>
        <position position="105"/>
    </location>
</feature>
<feature type="modified residue" description="N6-glutaryllysine; alternate" evidence="2">
    <location>
        <position position="105"/>
    </location>
</feature>
<feature type="modified residue" description="N6-lactoyllysine; alternate" evidence="2">
    <location>
        <position position="105"/>
    </location>
</feature>
<feature type="modified residue" description="N6-methyllysine" evidence="3">
    <location>
        <position position="105"/>
    </location>
</feature>
<feature type="modified residue" description="N6-methyllysine; alternate" evidence="3">
    <location>
        <position position="105"/>
    </location>
</feature>
<feature type="modified residue" description="Phosphothreonine" evidence="5">
    <location>
        <position position="112"/>
    </location>
</feature>
<feature type="modified residue" description="N6-(2-hydroxyisobutyryl)lysine; alternate" evidence="2">
    <location>
        <position position="113"/>
    </location>
</feature>
<feature type="modified residue" description="N6-(beta-hydroxybutyryl)lysine; alternate" evidence="2">
    <location>
        <position position="113"/>
    </location>
</feature>
<feature type="modified residue" description="N6-glutaryllysine; alternate" evidence="2">
    <location>
        <position position="113"/>
    </location>
</feature>
<feature type="modified residue" description="N6-lactoyllysine; alternate" evidence="2">
    <location>
        <position position="113"/>
    </location>
</feature>
<feature type="modified residue" description="N6-malonyllysine; alternate" evidence="2">
    <location>
        <position position="113"/>
    </location>
</feature>
<feature type="modified residue" description="N6-methylated lysine; alternate" evidence="5">
    <location>
        <position position="113"/>
    </location>
</feature>
<feature type="modified residue" description="N6-succinyllysine; alternate" evidence="2">
    <location>
        <position position="113"/>
    </location>
</feature>
<feature type="modified residue" description="N6-(2-hydroxyisobutyryl)lysine; alternate" evidence="2">
    <location>
        <position position="117"/>
    </location>
</feature>
<feature type="modified residue" description="N6-(beta-hydroxybutyryl)lysine; alternate" evidence="2">
    <location>
        <position position="117"/>
    </location>
</feature>
<feature type="modified residue" description="N6-glutaryllysine; alternate" evidence="2">
    <location>
        <position position="117"/>
    </location>
</feature>
<feature type="modified residue" description="N6-succinyllysine; alternate" evidence="2">
    <location>
        <position position="117"/>
    </location>
</feature>
<feature type="glycosylation site" description="O-linked (GlcNAc) serine" evidence="3">
    <location>
        <position position="109"/>
    </location>
</feature>
<feature type="cross-link" description="Glycyl lysine isopeptide (Lys-Gly) (interchain with G-Cter in ubiquitin); alternate" evidence="2">
    <location>
        <position position="31"/>
    </location>
</feature>
<feature type="cross-link" description="Glycyl lysine isopeptide (Lys-Gly) (interchain with G-Cter in ubiquitin); alternate" evidence="7">
    <location>
        <position position="117"/>
    </location>
</feature>
<organism>
    <name type="scientific">Homo sapiens</name>
    <name type="common">Human</name>
    <dbReference type="NCBI Taxonomy" id="9606"/>
    <lineage>
        <taxon>Eukaryota</taxon>
        <taxon>Metazoa</taxon>
        <taxon>Chordata</taxon>
        <taxon>Craniata</taxon>
        <taxon>Vertebrata</taxon>
        <taxon>Euteleostomi</taxon>
        <taxon>Mammalia</taxon>
        <taxon>Eutheria</taxon>
        <taxon>Euarchontoglires</taxon>
        <taxon>Primates</taxon>
        <taxon>Haplorrhini</taxon>
        <taxon>Catarrhini</taxon>
        <taxon>Hominidae</taxon>
        <taxon>Homo</taxon>
    </lineage>
</organism>
<gene>
    <name evidence="10" type="primary">H2BK1</name>
    <name evidence="10" type="synonym">H2BE1</name>
</gene>
<protein>
    <recommendedName>
        <fullName evidence="10">Histone H2B type 2-K1</fullName>
    </recommendedName>
    <alternativeName>
        <fullName evidence="9">Histone H2B type 2-E1</fullName>
    </alternativeName>
</protein>